<gene>
    <name type="primary">TUS1</name>
    <name type="synonym">SOP10</name>
    <name type="ordered locus">YLR425W</name>
</gene>
<sequence>MYRYNRSSPFERTPEKRVSRQESQRKSIELPKLPPLNTRNSFLDDSDNGTDNISIGWTPISDTQQFQSPVPQAFTFTSKHSARGNGTSSSESTPKSTKYVKERRPPPPPPLLYSTESIRIDSPMVSPSSQSRERSPNKLSFIGNSEERHHMEYISNHSRILKSPFANGFSPNSPKSPRDSSKQQAHFSDESDLRCHEREKALPPIPFTTTLLLSPFDDEDSEFFTKPPPPLSTSRNVSGNSRVSEALESVYSDSDYTFNNSNARQSSFNSLLGAKPLELAPSITAPTQPFSIQSIDEHKLYQCDNVYKLSAIYEWILKVYFEWFNECVFTKIDLFQIVQLLLEFQMPTNFDQDTIDSNVDNIMASFISQKAVRFDIINDEEVAVVVGGLDITGVFTELLPCYSFIDNTYGSTNSLICYSNVCTHGQSSGFRKEIKLSEIINKSVGLWTEYWHLTPDDLAEINPREVQRQSFIFDLIILEERSLNMATAAVEIYGKRFDKSLLPDEPEFKALAFDIFEPLIQLHTEFLLTPIFWKLKTRGKFIDGVGKIYSKWCGEAKNIYLNYAKAMATVHEIIMWEKKNKTKFVTWLKEIDNSVEITRSKMYHDVIFFGGFFKSLQNMPVTLRSILKNTDPSMEDYEYLKIVIKEVEKLNFEVNQVHGLAIDHRKLVRFSKQLVLSTNSSNATSYVNVGGSTNANDDDAIQDKLALGLTYPERKLVLSGTVYKKRDLWLDPTPVYIALLDNCLLITEEISKGETQKYKLIERPIPIDYLSLEKRKIPGTSKQPLRNYSQKEHKSPMHNFSTPINSMRPLLKSSGNHMSTAYGDRKTSNTEISNANPNTDEFSFKIRNTATGESFKFFTESAEVLNQWIDAIMESFKRNAENHDLNAFEFTVLSSEFAYFDKDAPVNLPVAPEGSEIDVALKAYAQKANKDSCSWSKTTRILCCEDVKFEGRIYLFVATTDGIYVKYRDDYGSGFVKILELNDVKRMEANVKLGLLFVLDNRKLCYFNISTVVSRYLAQGNTLDENCIVGTVIRDKVRFFKIADDFGNSKHLFFERKGKIVILTPEFDQLTNQVKYFKFYKEYKLPSSSNNILNNEIEDIAIFRKSFAVCTKKTVILYQDSFEDNGIVLPSFLNDKDMMAHLRHPHLNSLPFKSATDSKKRPSIESLTEEAKKDIATCKAIPVNFFQISQSSFFALVYDEAVVKINCYGEMSDWRKDILLLDFCCTGASFHGNHLILVGDNLIQIYDLKNVEQNLGELVPVQIIKGKKIKLASSERREKTILVLSHPNILNRQLLVACNPVAMADHQ</sequence>
<evidence type="ECO:0000255" key="1">
    <source>
        <dbReference type="PROSITE-ProRule" id="PRU00062"/>
    </source>
</evidence>
<evidence type="ECO:0000255" key="2">
    <source>
        <dbReference type="PROSITE-ProRule" id="PRU00145"/>
    </source>
</evidence>
<evidence type="ECO:0000255" key="3">
    <source>
        <dbReference type="PROSITE-ProRule" id="PRU00795"/>
    </source>
</evidence>
<evidence type="ECO:0000256" key="4">
    <source>
        <dbReference type="SAM" id="MobiDB-lite"/>
    </source>
</evidence>
<evidence type="ECO:0000269" key="5">
    <source>
    </source>
</evidence>
<organism>
    <name type="scientific">Saccharomyces cerevisiae (strain ATCC 204508 / S288c)</name>
    <name type="common">Baker's yeast</name>
    <dbReference type="NCBI Taxonomy" id="559292"/>
    <lineage>
        <taxon>Eukaryota</taxon>
        <taxon>Fungi</taxon>
        <taxon>Dikarya</taxon>
        <taxon>Ascomycota</taxon>
        <taxon>Saccharomycotina</taxon>
        <taxon>Saccharomycetes</taxon>
        <taxon>Saccharomycetales</taxon>
        <taxon>Saccharomycetaceae</taxon>
        <taxon>Saccharomyces</taxon>
    </lineage>
</organism>
<proteinExistence type="evidence at protein level"/>
<dbReference type="EMBL" id="U20939">
    <property type="protein sequence ID" value="AAB67506.1"/>
    <property type="molecule type" value="Genomic_DNA"/>
</dbReference>
<dbReference type="EMBL" id="BK006945">
    <property type="protein sequence ID" value="DAA09727.1"/>
    <property type="molecule type" value="Genomic_DNA"/>
</dbReference>
<dbReference type="PIR" id="S53412">
    <property type="entry name" value="S53412"/>
</dbReference>
<dbReference type="RefSeq" id="NP_013529.3">
    <property type="nucleotide sequence ID" value="NM_001182313.3"/>
</dbReference>
<dbReference type="BioGRID" id="31685">
    <property type="interactions" value="427"/>
</dbReference>
<dbReference type="DIP" id="DIP-4635N"/>
<dbReference type="FunCoup" id="Q06412">
    <property type="interactions" value="216"/>
</dbReference>
<dbReference type="IntAct" id="Q06412">
    <property type="interactions" value="7"/>
</dbReference>
<dbReference type="MINT" id="Q06412"/>
<dbReference type="STRING" id="4932.YLR425W"/>
<dbReference type="iPTMnet" id="Q06412"/>
<dbReference type="PaxDb" id="4932-YLR425W"/>
<dbReference type="PeptideAtlas" id="Q06412"/>
<dbReference type="EnsemblFungi" id="YLR425W_mRNA">
    <property type="protein sequence ID" value="YLR425W"/>
    <property type="gene ID" value="YLR425W"/>
</dbReference>
<dbReference type="GeneID" id="851145"/>
<dbReference type="KEGG" id="sce:YLR425W"/>
<dbReference type="AGR" id="SGD:S000004417"/>
<dbReference type="SGD" id="S000004417">
    <property type="gene designation" value="TUS1"/>
</dbReference>
<dbReference type="VEuPathDB" id="FungiDB:YLR425W"/>
<dbReference type="eggNOG" id="KOG4305">
    <property type="taxonomic scope" value="Eukaryota"/>
</dbReference>
<dbReference type="GeneTree" id="ENSGT00940000163420"/>
<dbReference type="HOGENOM" id="CLU_002884_0_0_1"/>
<dbReference type="InParanoid" id="Q06412"/>
<dbReference type="OMA" id="HEIITWE"/>
<dbReference type="OrthoDB" id="660555at2759"/>
<dbReference type="BioCyc" id="YEAST:G3O-32485-MONOMER"/>
<dbReference type="BioGRID-ORCS" id="851145">
    <property type="hits" value="0 hits in 10 CRISPR screens"/>
</dbReference>
<dbReference type="PRO" id="PR:Q06412"/>
<dbReference type="Proteomes" id="UP000002311">
    <property type="component" value="Chromosome XII"/>
</dbReference>
<dbReference type="RNAct" id="Q06412">
    <property type="molecule type" value="protein"/>
</dbReference>
<dbReference type="GO" id="GO:0032153">
    <property type="term" value="C:cell division site"/>
    <property type="evidence" value="ECO:0000318"/>
    <property type="project" value="GO_Central"/>
</dbReference>
<dbReference type="GO" id="GO:0071944">
    <property type="term" value="C:cell periphery"/>
    <property type="evidence" value="ECO:0000318"/>
    <property type="project" value="GO_Central"/>
</dbReference>
<dbReference type="GO" id="GO:0005935">
    <property type="term" value="C:cellular bud neck"/>
    <property type="evidence" value="ECO:0000314"/>
    <property type="project" value="SGD"/>
</dbReference>
<dbReference type="GO" id="GO:0005737">
    <property type="term" value="C:cytoplasm"/>
    <property type="evidence" value="ECO:0000318"/>
    <property type="project" value="GO_Central"/>
</dbReference>
<dbReference type="GO" id="GO:0000131">
    <property type="term" value="C:incipient cellular bud site"/>
    <property type="evidence" value="ECO:0000314"/>
    <property type="project" value="SGD"/>
</dbReference>
<dbReference type="GO" id="GO:0005085">
    <property type="term" value="F:guanyl-nucleotide exchange factor activity"/>
    <property type="evidence" value="ECO:0000314"/>
    <property type="project" value="SGD"/>
</dbReference>
<dbReference type="GO" id="GO:0031505">
    <property type="term" value="P:fungal-type cell wall organization"/>
    <property type="evidence" value="ECO:0000315"/>
    <property type="project" value="SGD"/>
</dbReference>
<dbReference type="GO" id="GO:1903501">
    <property type="term" value="P:positive regulation of mitotic actomyosin contractile ring assembly"/>
    <property type="evidence" value="ECO:0000315"/>
    <property type="project" value="SGD"/>
</dbReference>
<dbReference type="GO" id="GO:1903338">
    <property type="term" value="P:regulation of cell wall organization or biogenesis"/>
    <property type="evidence" value="ECO:0000318"/>
    <property type="project" value="GO_Central"/>
</dbReference>
<dbReference type="GO" id="GO:0007165">
    <property type="term" value="P:signal transduction"/>
    <property type="evidence" value="ECO:0000315"/>
    <property type="project" value="SGD"/>
</dbReference>
<dbReference type="GO" id="GO:0007264">
    <property type="term" value="P:small GTPase-mediated signal transduction"/>
    <property type="evidence" value="ECO:0000318"/>
    <property type="project" value="GO_Central"/>
</dbReference>
<dbReference type="CDD" id="cd00160">
    <property type="entry name" value="RhoGEF"/>
    <property type="match status" value="1"/>
</dbReference>
<dbReference type="FunFam" id="1.20.900.10:FF:000056">
    <property type="entry name" value="TOR unique function suppressor"/>
    <property type="match status" value="1"/>
</dbReference>
<dbReference type="Gene3D" id="1.20.900.10">
    <property type="entry name" value="Dbl homology (DH) domain"/>
    <property type="match status" value="1"/>
</dbReference>
<dbReference type="Gene3D" id="2.30.29.30">
    <property type="entry name" value="Pleckstrin-homology domain (PH domain)/Phosphotyrosine-binding domain (PTB)"/>
    <property type="match status" value="1"/>
</dbReference>
<dbReference type="InterPro" id="IPR001180">
    <property type="entry name" value="CNH_dom"/>
</dbReference>
<dbReference type="InterPro" id="IPR035899">
    <property type="entry name" value="DBL_dom_sf"/>
</dbReference>
<dbReference type="InterPro" id="IPR000219">
    <property type="entry name" value="DH_dom"/>
</dbReference>
<dbReference type="InterPro" id="IPR011993">
    <property type="entry name" value="PH-like_dom_sf"/>
</dbReference>
<dbReference type="InterPro" id="IPR001849">
    <property type="entry name" value="PH_domain"/>
</dbReference>
<dbReference type="InterPro" id="IPR052233">
    <property type="entry name" value="Rho-type_GEFs"/>
</dbReference>
<dbReference type="PANTHER" id="PTHR46572">
    <property type="entry name" value="RHO1 GDP-GTP EXCHANGE PROTEIN 1-RELATED"/>
    <property type="match status" value="1"/>
</dbReference>
<dbReference type="PANTHER" id="PTHR46572:SF1">
    <property type="entry name" value="RHO1 GUANINE NUCLEOTIDE EXCHANGE FACTOR TUS1"/>
    <property type="match status" value="1"/>
</dbReference>
<dbReference type="Pfam" id="PF00780">
    <property type="entry name" value="CNH"/>
    <property type="match status" value="1"/>
</dbReference>
<dbReference type="Pfam" id="PF00621">
    <property type="entry name" value="RhoGEF"/>
    <property type="match status" value="1"/>
</dbReference>
<dbReference type="Pfam" id="PF23582">
    <property type="entry name" value="WH_RGF3"/>
    <property type="match status" value="1"/>
</dbReference>
<dbReference type="SMART" id="SM00036">
    <property type="entry name" value="CNH"/>
    <property type="match status" value="1"/>
</dbReference>
<dbReference type="SMART" id="SM00233">
    <property type="entry name" value="PH"/>
    <property type="match status" value="1"/>
</dbReference>
<dbReference type="SMART" id="SM00325">
    <property type="entry name" value="RhoGEF"/>
    <property type="match status" value="1"/>
</dbReference>
<dbReference type="SUPFAM" id="SSF48065">
    <property type="entry name" value="DBL homology domain (DH-domain)"/>
    <property type="match status" value="1"/>
</dbReference>
<dbReference type="SUPFAM" id="SSF50729">
    <property type="entry name" value="PH domain-like"/>
    <property type="match status" value="1"/>
</dbReference>
<dbReference type="PROSITE" id="PS50219">
    <property type="entry name" value="CNH"/>
    <property type="match status" value="1"/>
</dbReference>
<dbReference type="PROSITE" id="PS50010">
    <property type="entry name" value="DH_2"/>
    <property type="match status" value="1"/>
</dbReference>
<dbReference type="PROSITE" id="PS50003">
    <property type="entry name" value="PH_DOMAIN"/>
    <property type="match status" value="1"/>
</dbReference>
<protein>
    <recommendedName>
        <fullName>Rho1 guanine nucleotide exchange factor TUS1</fullName>
    </recommendedName>
    <alternativeName>
        <fullName>TOR unique function suppressor protein 1</fullName>
    </alternativeName>
</protein>
<accession>Q06412</accession>
<accession>D6VZ61</accession>
<name>TUS1_YEAST</name>
<comment type="function">
    <text evidence="5">Guanine nucleotide-exchange factor (GEF) for RHO1 that stimulates the exchange of RHO1 GDP-bound form into GTP-bound form. Required for signaling of cell wall defects to RHO1.</text>
</comment>
<comment type="subunit">
    <text evidence="5">Interacts with RHO1.</text>
</comment>
<comment type="interaction">
    <interactant intactId="EBI-37117">
        <id>Q06412</id>
    </interactant>
    <interactant intactId="EBI-18140">
        <id>P40073</id>
        <label>SHO1</label>
    </interactant>
    <organismsDiffer>false</organismsDiffer>
    <experiments>3</experiments>
</comment>
<comment type="domain">
    <text>The DH domain mediates interaction with RHO1.</text>
</comment>
<keyword id="KW-0344">Guanine-nucleotide releasing factor</keyword>
<keyword id="KW-1185">Reference proteome</keyword>
<feature type="chain" id="PRO_0000080979" description="Rho1 guanine nucleotide exchange factor TUS1">
    <location>
        <begin position="1"/>
        <end position="1307"/>
    </location>
</feature>
<feature type="domain" description="DH" evidence="1">
    <location>
        <begin position="467"/>
        <end position="657"/>
    </location>
</feature>
<feature type="domain" description="PH" evidence="2">
    <location>
        <begin position="715"/>
        <end position="877"/>
    </location>
</feature>
<feature type="domain" description="CNH" evidence="3">
    <location>
        <begin position="938"/>
        <end position="1279"/>
    </location>
</feature>
<feature type="region of interest" description="Disordered" evidence="4">
    <location>
        <begin position="1"/>
        <end position="144"/>
    </location>
</feature>
<feature type="region of interest" description="Disordered" evidence="4">
    <location>
        <begin position="164"/>
        <end position="194"/>
    </location>
</feature>
<feature type="region of interest" description="Disordered" evidence="4">
    <location>
        <begin position="219"/>
        <end position="239"/>
    </location>
</feature>
<feature type="region of interest" description="Disordered" evidence="4">
    <location>
        <begin position="780"/>
        <end position="802"/>
    </location>
</feature>
<feature type="compositionally biased region" description="Polar residues" evidence="4">
    <location>
        <begin position="1"/>
        <end position="10"/>
    </location>
</feature>
<feature type="compositionally biased region" description="Basic and acidic residues" evidence="4">
    <location>
        <begin position="12"/>
        <end position="29"/>
    </location>
</feature>
<feature type="compositionally biased region" description="Polar residues" evidence="4">
    <location>
        <begin position="37"/>
        <end position="79"/>
    </location>
</feature>
<feature type="compositionally biased region" description="Low complexity" evidence="4">
    <location>
        <begin position="87"/>
        <end position="97"/>
    </location>
</feature>
<feature type="compositionally biased region" description="Basic and acidic residues" evidence="4">
    <location>
        <begin position="176"/>
        <end position="194"/>
    </location>
</feature>
<reference key="1">
    <citation type="journal article" date="1997" name="Nature">
        <title>The nucleotide sequence of Saccharomyces cerevisiae chromosome XII.</title>
        <authorList>
            <person name="Johnston M."/>
            <person name="Hillier L.W."/>
            <person name="Riles L."/>
            <person name="Albermann K."/>
            <person name="Andre B."/>
            <person name="Ansorge W."/>
            <person name="Benes V."/>
            <person name="Brueckner M."/>
            <person name="Delius H."/>
            <person name="Dubois E."/>
            <person name="Duesterhoeft A."/>
            <person name="Entian K.-D."/>
            <person name="Floeth M."/>
            <person name="Goffeau A."/>
            <person name="Hebling U."/>
            <person name="Heumann K."/>
            <person name="Heuss-Neitzel D."/>
            <person name="Hilbert H."/>
            <person name="Hilger F."/>
            <person name="Kleine K."/>
            <person name="Koetter P."/>
            <person name="Louis E.J."/>
            <person name="Messenguy F."/>
            <person name="Mewes H.-W."/>
            <person name="Miosga T."/>
            <person name="Moestl D."/>
            <person name="Mueller-Auer S."/>
            <person name="Nentwich U."/>
            <person name="Obermaier B."/>
            <person name="Piravandi E."/>
            <person name="Pohl T.M."/>
            <person name="Portetelle D."/>
            <person name="Purnelle B."/>
            <person name="Rechmann S."/>
            <person name="Rieger M."/>
            <person name="Rinke M."/>
            <person name="Rose M."/>
            <person name="Scharfe M."/>
            <person name="Scherens B."/>
            <person name="Scholler P."/>
            <person name="Schwager C."/>
            <person name="Schwarz S."/>
            <person name="Underwood A.P."/>
            <person name="Urrestarazu L.A."/>
            <person name="Vandenbol M."/>
            <person name="Verhasselt P."/>
            <person name="Vierendeels F."/>
            <person name="Voet M."/>
            <person name="Volckaert G."/>
            <person name="Voss H."/>
            <person name="Wambutt R."/>
            <person name="Wedler E."/>
            <person name="Wedler H."/>
            <person name="Zimmermann F.K."/>
            <person name="Zollner A."/>
            <person name="Hani J."/>
            <person name="Hoheisel J.D."/>
        </authorList>
    </citation>
    <scope>NUCLEOTIDE SEQUENCE [LARGE SCALE GENOMIC DNA]</scope>
    <source>
        <strain>ATCC 204508 / S288c</strain>
    </source>
</reference>
<reference key="2">
    <citation type="journal article" date="2014" name="G3 (Bethesda)">
        <title>The reference genome sequence of Saccharomyces cerevisiae: Then and now.</title>
        <authorList>
            <person name="Engel S.R."/>
            <person name="Dietrich F.S."/>
            <person name="Fisk D.G."/>
            <person name="Binkley G."/>
            <person name="Balakrishnan R."/>
            <person name="Costanzo M.C."/>
            <person name="Dwight S.S."/>
            <person name="Hitz B.C."/>
            <person name="Karra K."/>
            <person name="Nash R.S."/>
            <person name="Weng S."/>
            <person name="Wong E.D."/>
            <person name="Lloyd P."/>
            <person name="Skrzypek M.S."/>
            <person name="Miyasato S.R."/>
            <person name="Simison M."/>
            <person name="Cherry J.M."/>
        </authorList>
    </citation>
    <scope>GENOME REANNOTATION</scope>
    <source>
        <strain>ATCC 204508 / S288c</strain>
    </source>
</reference>
<reference key="3">
    <citation type="journal article" date="2002" name="Mol. Cell. Biol.">
        <title>Yeast protein kinases and the RHO1 exchange factor TUS1 are novel components of the cell integrity pathway in yeast.</title>
        <authorList>
            <person name="Schmelzle T."/>
            <person name="Helliwell S.B."/>
            <person name="Hall M.N."/>
        </authorList>
    </citation>
    <scope>FUNCTION</scope>
    <scope>INTERACTION WITH RHO1</scope>
</reference>
<reference key="4">
    <citation type="journal article" date="2008" name="Mol. Cell. Proteomics">
        <title>A multidimensional chromatography technology for in-depth phosphoproteome analysis.</title>
        <authorList>
            <person name="Albuquerque C.P."/>
            <person name="Smolka M.B."/>
            <person name="Payne S.H."/>
            <person name="Bafna V."/>
            <person name="Eng J."/>
            <person name="Zhou H."/>
        </authorList>
    </citation>
    <scope>IDENTIFICATION BY MASS SPECTROMETRY [LARGE SCALE ANALYSIS]</scope>
</reference>